<gene>
    <name type="primary">nodJ</name>
    <name type="ordered locus">RA0471</name>
    <name type="ORF">SMa0863</name>
</gene>
<protein>
    <recommendedName>
        <fullName>Nodulation protein J</fullName>
    </recommendedName>
</protein>
<comment type="function">
    <text evidence="1">Part of the ABC transporter complex NodIJ involved in the export of the nodulation factors (Nod factors), the bacterial signal molecules that induce symbiosis and subsequent nodulation induction. Nod factors are LCO (lipo-chitin oligosaccharide), a modified beta-1,4-linked N-acetylglucosamine oligosaccharide. This subunit encodes the transporter (By similarity).</text>
</comment>
<comment type="subunit">
    <text evidence="4">The complex is composed of two ATP-binding proteins (NodI) and two transmembrane proteins (NodJ).</text>
</comment>
<comment type="subcellular location">
    <subcellularLocation>
        <location evidence="4">Cell inner membrane</location>
        <topology evidence="4">Multi-pass membrane protein</topology>
    </subcellularLocation>
</comment>
<comment type="similarity">
    <text evidence="4">Belongs to the ABC-2 integral membrane protein family. Lipooligosaccharide exporter (TC 3.A.1.102) subfamily.</text>
</comment>
<organism>
    <name type="scientific">Rhizobium meliloti (strain 1021)</name>
    <name type="common">Ensifer meliloti</name>
    <name type="synonym">Sinorhizobium meliloti</name>
    <dbReference type="NCBI Taxonomy" id="266834"/>
    <lineage>
        <taxon>Bacteria</taxon>
        <taxon>Pseudomonadati</taxon>
        <taxon>Pseudomonadota</taxon>
        <taxon>Alphaproteobacteria</taxon>
        <taxon>Hyphomicrobiales</taxon>
        <taxon>Rhizobiaceae</taxon>
        <taxon>Sinorhizobium/Ensifer group</taxon>
        <taxon>Sinorhizobium</taxon>
    </lineage>
</organism>
<geneLocation type="plasmid">
    <name>pSymA</name>
    <name>megaplasmid 1</name>
</geneLocation>
<name>NODJ_RHIME</name>
<feature type="chain" id="PRO_0000182989" description="Nodulation protein J">
    <location>
        <begin position="1"/>
        <end position="262"/>
    </location>
</feature>
<feature type="transmembrane region" description="Helical" evidence="2">
    <location>
        <begin position="35"/>
        <end position="55"/>
    </location>
</feature>
<feature type="transmembrane region" description="Helical" evidence="2">
    <location>
        <begin position="62"/>
        <end position="82"/>
    </location>
</feature>
<feature type="transmembrane region" description="Helical" evidence="2">
    <location>
        <begin position="102"/>
        <end position="122"/>
    </location>
</feature>
<feature type="transmembrane region" description="Helical" evidence="2">
    <location>
        <begin position="127"/>
        <end position="147"/>
    </location>
</feature>
<feature type="transmembrane region" description="Helical" evidence="2">
    <location>
        <begin position="148"/>
        <end position="168"/>
    </location>
</feature>
<feature type="transmembrane region" description="Helical" evidence="2">
    <location>
        <begin position="177"/>
        <end position="197"/>
    </location>
</feature>
<feature type="transmembrane region" description="Helical" evidence="2">
    <location>
        <begin position="231"/>
        <end position="251"/>
    </location>
</feature>
<feature type="domain" description="ABC transmembrane type-2" evidence="3">
    <location>
        <begin position="33"/>
        <end position="259"/>
    </location>
</feature>
<evidence type="ECO:0000250" key="1"/>
<evidence type="ECO:0000255" key="2"/>
<evidence type="ECO:0000255" key="3">
    <source>
        <dbReference type="PROSITE-ProRule" id="PRU00442"/>
    </source>
</evidence>
<evidence type="ECO:0000305" key="4"/>
<proteinExistence type="inferred from homology"/>
<accession>O52619</accession>
<dbReference type="EMBL" id="AF043118">
    <property type="protein sequence ID" value="AAB97763.1"/>
    <property type="molecule type" value="Genomic_DNA"/>
</dbReference>
<dbReference type="EMBL" id="AE006469">
    <property type="protein sequence ID" value="AAK65129.1"/>
    <property type="molecule type" value="Genomic_DNA"/>
</dbReference>
<dbReference type="PIR" id="G95320">
    <property type="entry name" value="G95320"/>
</dbReference>
<dbReference type="RefSeq" id="NP_435717.1">
    <property type="nucleotide sequence ID" value="NC_003037.1"/>
</dbReference>
<dbReference type="RefSeq" id="WP_010967452.1">
    <property type="nucleotide sequence ID" value="NC_003037.1"/>
</dbReference>
<dbReference type="SMR" id="O52619"/>
<dbReference type="EnsemblBacteria" id="AAK65129">
    <property type="protein sequence ID" value="AAK65129"/>
    <property type="gene ID" value="SMa0863"/>
</dbReference>
<dbReference type="KEGG" id="sme:SMa0863"/>
<dbReference type="PATRIC" id="fig|266834.11.peg.482"/>
<dbReference type="HOGENOM" id="CLU_039483_3_1_5"/>
<dbReference type="OrthoDB" id="9778589at2"/>
<dbReference type="Proteomes" id="UP000001976">
    <property type="component" value="Plasmid pSymA"/>
</dbReference>
<dbReference type="GO" id="GO:0043190">
    <property type="term" value="C:ATP-binding cassette (ABC) transporter complex"/>
    <property type="evidence" value="ECO:0007669"/>
    <property type="project" value="InterPro"/>
</dbReference>
<dbReference type="GO" id="GO:0140359">
    <property type="term" value="F:ABC-type transporter activity"/>
    <property type="evidence" value="ECO:0007669"/>
    <property type="project" value="InterPro"/>
</dbReference>
<dbReference type="GO" id="GO:0015772">
    <property type="term" value="P:oligosaccharide transport"/>
    <property type="evidence" value="ECO:0007669"/>
    <property type="project" value="InterPro"/>
</dbReference>
<dbReference type="InterPro" id="IPR013525">
    <property type="entry name" value="ABC2_TM"/>
</dbReference>
<dbReference type="InterPro" id="IPR047817">
    <property type="entry name" value="ABC2_TM_bact-type"/>
</dbReference>
<dbReference type="InterPro" id="IPR000412">
    <property type="entry name" value="ABC_2_transport"/>
</dbReference>
<dbReference type="InterPro" id="IPR005981">
    <property type="entry name" value="ABC_transptNodJ"/>
</dbReference>
<dbReference type="InterPro" id="IPR051784">
    <property type="entry name" value="Nod_factor_ABC_transporter"/>
</dbReference>
<dbReference type="NCBIfam" id="TIGR01291">
    <property type="entry name" value="nodJ"/>
    <property type="match status" value="1"/>
</dbReference>
<dbReference type="PANTHER" id="PTHR43229">
    <property type="entry name" value="NODULATION PROTEIN J"/>
    <property type="match status" value="1"/>
</dbReference>
<dbReference type="PANTHER" id="PTHR43229:SF2">
    <property type="entry name" value="NODULATION PROTEIN J"/>
    <property type="match status" value="1"/>
</dbReference>
<dbReference type="Pfam" id="PF01061">
    <property type="entry name" value="ABC2_membrane"/>
    <property type="match status" value="1"/>
</dbReference>
<dbReference type="PIRSF" id="PIRSF006648">
    <property type="entry name" value="DrrB"/>
    <property type="match status" value="1"/>
</dbReference>
<dbReference type="PRINTS" id="PR00164">
    <property type="entry name" value="ABC2TRNSPORT"/>
</dbReference>
<dbReference type="PROSITE" id="PS51012">
    <property type="entry name" value="ABC_TM2"/>
    <property type="match status" value="1"/>
</dbReference>
<keyword id="KW-0997">Cell inner membrane</keyword>
<keyword id="KW-1003">Cell membrane</keyword>
<keyword id="KW-0472">Membrane</keyword>
<keyword id="KW-0536">Nodulation</keyword>
<keyword id="KW-0614">Plasmid</keyword>
<keyword id="KW-1185">Reference proteome</keyword>
<keyword id="KW-0812">Transmembrane</keyword>
<keyword id="KW-1133">Transmembrane helix</keyword>
<keyword id="KW-0813">Transport</keyword>
<reference key="1">
    <citation type="submission" date="1998-01" db="EMBL/GenBank/DDBJ databases">
        <title>Nucleotide sequence of nodIJ region of Rhizobium meliloti pSymA.</title>
        <authorList>
            <person name="Barnett M.J."/>
            <person name="Long S.R."/>
        </authorList>
    </citation>
    <scope>NUCLEOTIDE SEQUENCE [GENOMIC DNA]</scope>
    <source>
        <strain>1021</strain>
    </source>
</reference>
<reference key="2">
    <citation type="journal article" date="2001" name="Proc. Natl. Acad. Sci. U.S.A.">
        <title>Nucleotide sequence and predicted functions of the entire Sinorhizobium meliloti pSymA megaplasmid.</title>
        <authorList>
            <person name="Barnett M.J."/>
            <person name="Fisher R.F."/>
            <person name="Jones T."/>
            <person name="Komp C."/>
            <person name="Abola A.P."/>
            <person name="Barloy-Hubler F."/>
            <person name="Bowser L."/>
            <person name="Capela D."/>
            <person name="Galibert F."/>
            <person name="Gouzy J."/>
            <person name="Gurjal M."/>
            <person name="Hong A."/>
            <person name="Huizar L."/>
            <person name="Hyman R.W."/>
            <person name="Kahn D."/>
            <person name="Kahn M.L."/>
            <person name="Kalman S."/>
            <person name="Keating D.H."/>
            <person name="Palm C."/>
            <person name="Peck M.C."/>
            <person name="Surzycki R."/>
            <person name="Wells D.H."/>
            <person name="Yeh K.-C."/>
            <person name="Davis R.W."/>
            <person name="Federspiel N.A."/>
            <person name="Long S.R."/>
        </authorList>
    </citation>
    <scope>NUCLEOTIDE SEQUENCE [LARGE SCALE GENOMIC DNA]</scope>
    <source>
        <strain>1021</strain>
    </source>
</reference>
<reference key="3">
    <citation type="journal article" date="2001" name="Science">
        <title>The composite genome of the legume symbiont Sinorhizobium meliloti.</title>
        <authorList>
            <person name="Galibert F."/>
            <person name="Finan T.M."/>
            <person name="Long S.R."/>
            <person name="Puehler A."/>
            <person name="Abola P."/>
            <person name="Ampe F."/>
            <person name="Barloy-Hubler F."/>
            <person name="Barnett M.J."/>
            <person name="Becker A."/>
            <person name="Boistard P."/>
            <person name="Bothe G."/>
            <person name="Boutry M."/>
            <person name="Bowser L."/>
            <person name="Buhrmester J."/>
            <person name="Cadieu E."/>
            <person name="Capela D."/>
            <person name="Chain P."/>
            <person name="Cowie A."/>
            <person name="Davis R.W."/>
            <person name="Dreano S."/>
            <person name="Federspiel N.A."/>
            <person name="Fisher R.F."/>
            <person name="Gloux S."/>
            <person name="Godrie T."/>
            <person name="Goffeau A."/>
            <person name="Golding B."/>
            <person name="Gouzy J."/>
            <person name="Gurjal M."/>
            <person name="Hernandez-Lucas I."/>
            <person name="Hong A."/>
            <person name="Huizar L."/>
            <person name="Hyman R.W."/>
            <person name="Jones T."/>
            <person name="Kahn D."/>
            <person name="Kahn M.L."/>
            <person name="Kalman S."/>
            <person name="Keating D.H."/>
            <person name="Kiss E."/>
            <person name="Komp C."/>
            <person name="Lelaure V."/>
            <person name="Masuy D."/>
            <person name="Palm C."/>
            <person name="Peck M.C."/>
            <person name="Pohl T.M."/>
            <person name="Portetelle D."/>
            <person name="Purnelle B."/>
            <person name="Ramsperger U."/>
            <person name="Surzycki R."/>
            <person name="Thebault P."/>
            <person name="Vandenbol M."/>
            <person name="Vorhoelter F.J."/>
            <person name="Weidner S."/>
            <person name="Wells D.H."/>
            <person name="Wong K."/>
            <person name="Yeh K.-C."/>
            <person name="Batut J."/>
        </authorList>
    </citation>
    <scope>NUCLEOTIDE SEQUENCE [LARGE SCALE GENOMIC DNA]</scope>
    <source>
        <strain>1021</strain>
    </source>
</reference>
<sequence>MWKLYVAALPANGWNWIAVWRRNYLAWKKVALASILGNLADPLIYLFGLGAGLGMMVGRVDGVSYIAFLSAGMVATSAMTASTFETIYATFARMRAQRTWEAILHTQVTIGDIVLGELAWAATKASLAGTGIGVVAATLGYTEWVSLLYALPVIALTGLAFASLAMIVTALAPSYEYFIFYQTLVITPMLFLSGAVFPVNQLPGAFQHVTRILPLAHSIDVIRPIMLGSPLVHVGLHIGALCCYAVVPFFLSTALLRRRLMP</sequence>